<organism>
    <name type="scientific">Mycobacterium leprae (strain TN)</name>
    <dbReference type="NCBI Taxonomy" id="272631"/>
    <lineage>
        <taxon>Bacteria</taxon>
        <taxon>Bacillati</taxon>
        <taxon>Actinomycetota</taxon>
        <taxon>Actinomycetes</taxon>
        <taxon>Mycobacteriales</taxon>
        <taxon>Mycobacteriaceae</taxon>
        <taxon>Mycobacterium</taxon>
    </lineage>
</organism>
<accession>P46509</accession>
<proteinExistence type="inferred from homology"/>
<comment type="function">
    <text evidence="1">ATPase which is responsible for recognizing, binding, unfolding and translocation of pupylated proteins into the bacterial 20S proteasome core particle. May be essential for opening the gate of the 20S proteasome via an interaction with its C-terminus, thereby allowing substrate entry and access to the site of proteolysis. Thus, the C-termini of the proteasomal ATPase may function like a 'key in a lock' to induce gate opening and therefore regulate proteolysis.</text>
</comment>
<comment type="pathway">
    <text evidence="1">Protein degradation; proteasomal Pup-dependent pathway.</text>
</comment>
<comment type="subunit">
    <text evidence="1">Homohexamer. Assembles into a hexameric ring structure that caps the 20S proteasome core. Strongly interacts with the prokaryotic ubiquitin-like protein Pup through a hydrophobic interface; the interacting region of ARC lies in its N-terminal coiled-coil domain. There is one Pup binding site per ARC hexamer ring. Upon ATP-binding, the C-terminus of ARC interacts with the alpha-rings of the proteasome core, possibly by binding to the intersubunit pockets.</text>
</comment>
<comment type="domain">
    <text evidence="1">Consists of three main regions, an N-terminal coiled-coil domain that binds to protein Pup and functions as a docking station, an interdomain involved in ARC hexamerization, and a C-terminal ATPase domain of the AAA type.</text>
</comment>
<comment type="similarity">
    <text evidence="1">Belongs to the AAA ATPase family.</text>
</comment>
<feature type="chain" id="PRO_0000084780" description="Proteasome-associated ATPase">
    <location>
        <begin position="1"/>
        <end position="609"/>
    </location>
</feature>
<feature type="region of interest" description="Disordered" evidence="2">
    <location>
        <begin position="1"/>
        <end position="22"/>
    </location>
</feature>
<feature type="region of interest" description="Docks into pockets in the proteasome alpha-ring" evidence="1">
    <location>
        <begin position="608"/>
        <end position="609"/>
    </location>
</feature>
<feature type="coiled-coil region" evidence="1">
    <location>
        <begin position="20"/>
        <end position="96"/>
    </location>
</feature>
<feature type="binding site" evidence="1">
    <location>
        <begin position="296"/>
        <end position="301"/>
    </location>
    <ligand>
        <name>ATP</name>
        <dbReference type="ChEBI" id="CHEBI:30616"/>
    </ligand>
</feature>
<gene>
    <name evidence="1" type="primary">mpa</name>
    <name type="ordered locus">ML1316</name>
    <name type="ORF">a2126a</name>
    <name type="ORF">B2126_C1_167</name>
    <name type="ORF">MLCB2533.12</name>
</gene>
<protein>
    <recommendedName>
        <fullName evidence="1">Proteasome-associated ATPase</fullName>
    </recommendedName>
    <alternativeName>
        <fullName evidence="1">AAA ATPase forming ring-shaped complexes</fullName>
        <shortName evidence="1">ARC</shortName>
    </alternativeName>
    <alternativeName>
        <fullName evidence="1">Mycobacterial proteasome ATPase</fullName>
    </alternativeName>
</protein>
<evidence type="ECO:0000255" key="1">
    <source>
        <dbReference type="HAMAP-Rule" id="MF_02112"/>
    </source>
</evidence>
<evidence type="ECO:0000256" key="2">
    <source>
        <dbReference type="SAM" id="MobiDB-lite"/>
    </source>
</evidence>
<reference key="1">
    <citation type="submission" date="1994-03" db="EMBL/GenBank/DDBJ databases">
        <authorList>
            <person name="Smith D.R."/>
            <person name="Robison K."/>
        </authorList>
    </citation>
    <scope>NUCLEOTIDE SEQUENCE [GENOMIC DNA]</scope>
</reference>
<reference key="2">
    <citation type="journal article" date="2001" name="Nature">
        <title>Massive gene decay in the leprosy bacillus.</title>
        <authorList>
            <person name="Cole S.T."/>
            <person name="Eiglmeier K."/>
            <person name="Parkhill J."/>
            <person name="James K.D."/>
            <person name="Thomson N.R."/>
            <person name="Wheeler P.R."/>
            <person name="Honore N."/>
            <person name="Garnier T."/>
            <person name="Churcher C.M."/>
            <person name="Harris D.E."/>
            <person name="Mungall K.L."/>
            <person name="Basham D."/>
            <person name="Brown D."/>
            <person name="Chillingworth T."/>
            <person name="Connor R."/>
            <person name="Davies R.M."/>
            <person name="Devlin K."/>
            <person name="Duthoy S."/>
            <person name="Feltwell T."/>
            <person name="Fraser A."/>
            <person name="Hamlin N."/>
            <person name="Holroyd S."/>
            <person name="Hornsby T."/>
            <person name="Jagels K."/>
            <person name="Lacroix C."/>
            <person name="Maclean J."/>
            <person name="Moule S."/>
            <person name="Murphy L.D."/>
            <person name="Oliver K."/>
            <person name="Quail M.A."/>
            <person name="Rajandream M.A."/>
            <person name="Rutherford K.M."/>
            <person name="Rutter S."/>
            <person name="Seeger K."/>
            <person name="Simon S."/>
            <person name="Simmonds M."/>
            <person name="Skelton J."/>
            <person name="Squares R."/>
            <person name="Squares S."/>
            <person name="Stevens K."/>
            <person name="Taylor K."/>
            <person name="Whitehead S."/>
            <person name="Woodward J.R."/>
            <person name="Barrell B.G."/>
        </authorList>
    </citation>
    <scope>NUCLEOTIDE SEQUENCE [LARGE SCALE GENOMIC DNA]</scope>
    <source>
        <strain>TN</strain>
    </source>
</reference>
<sequence length="609" mass="67449">MGESERSEAFNPPREAGMSSGDIAELEQLRREIVVLREQLEHAVGPHGSVRSVRDVHQLEARIDSLTARNSKLMDTLKEARQQLLALREEVDRLGQPPSGYGVLLAAHDDETVDVFTSGRKMRLTCSPNIEVASLRKGQTVRLNEALTVVEAGTFEAVGEVSTLREVLADGHRALVVGHADEERIVCLAEPLVAENLLDGVPGALNDDSRPRKLRPGDSLLVDPKAGYAFERVPKAEVEDLVLEEVPDVSYQDIGGLTRQIEQIRDAVELPFLHKELYREYALRPPKGVLLYGPPGCGKTLIAKAVANSLAKKMAEVRGDDAREAKSYFLNIKGPELLNKFVGETERHIRLIFQRAREKASEGTPVIVFFDEMDSIFRTRGTGVSSDVETTVVPQLLSEIDGVEGLENVIVIGASNREDMIDPAILRPGRLDVKIKIERPDAEAAQDIYSKYLTESLPVHADDLTEFDGDRAACIKAMIEKVVDRMYAEIDDNRFLEVTYANGDKEVMYFKDFNSGAMIQNVVDRAKKNAIKSVLETGQPGLRIQHLLDSIVDEFAENEDLPNTTNPDDWARISGKKGERIVYIRTLVTGKSSSASRAIDTESNLGQYL</sequence>
<name>ARC_MYCLE</name>
<keyword id="KW-0067">ATP-binding</keyword>
<keyword id="KW-0143">Chaperone</keyword>
<keyword id="KW-0175">Coiled coil</keyword>
<keyword id="KW-0547">Nucleotide-binding</keyword>
<keyword id="KW-0647">Proteasome</keyword>
<keyword id="KW-1185">Reference proteome</keyword>
<dbReference type="EMBL" id="U00017">
    <property type="protein sequence ID" value="AAA17185.1"/>
    <property type="molecule type" value="Genomic_DNA"/>
</dbReference>
<dbReference type="EMBL" id="AL035310">
    <property type="protein sequence ID" value="CAA22926.1"/>
    <property type="molecule type" value="Genomic_DNA"/>
</dbReference>
<dbReference type="EMBL" id="AL583921">
    <property type="protein sequence ID" value="CAC31697.1"/>
    <property type="molecule type" value="Genomic_DNA"/>
</dbReference>
<dbReference type="PIR" id="S72845">
    <property type="entry name" value="S72845"/>
</dbReference>
<dbReference type="RefSeq" id="NP_301947.1">
    <property type="nucleotide sequence ID" value="NC_002677.1"/>
</dbReference>
<dbReference type="SMR" id="P46509"/>
<dbReference type="STRING" id="272631.gene:17575150"/>
<dbReference type="KEGG" id="mle:ML1316"/>
<dbReference type="PATRIC" id="fig|272631.5.peg.2428"/>
<dbReference type="Leproma" id="ML1316"/>
<dbReference type="eggNOG" id="COG1222">
    <property type="taxonomic scope" value="Bacteria"/>
</dbReference>
<dbReference type="HOGENOM" id="CLU_036054_0_0_11"/>
<dbReference type="OrthoDB" id="9809379at2"/>
<dbReference type="UniPathway" id="UPA00997"/>
<dbReference type="Proteomes" id="UP000000806">
    <property type="component" value="Chromosome"/>
</dbReference>
<dbReference type="GO" id="GO:0000502">
    <property type="term" value="C:proteasome complex"/>
    <property type="evidence" value="ECO:0007669"/>
    <property type="project" value="UniProtKB-KW"/>
</dbReference>
<dbReference type="GO" id="GO:0005524">
    <property type="term" value="F:ATP binding"/>
    <property type="evidence" value="ECO:0007669"/>
    <property type="project" value="UniProtKB-UniRule"/>
</dbReference>
<dbReference type="GO" id="GO:0016887">
    <property type="term" value="F:ATP hydrolysis activity"/>
    <property type="evidence" value="ECO:0007669"/>
    <property type="project" value="UniProtKB-UniRule"/>
</dbReference>
<dbReference type="GO" id="GO:0019941">
    <property type="term" value="P:modification-dependent protein catabolic process"/>
    <property type="evidence" value="ECO:0007669"/>
    <property type="project" value="InterPro"/>
</dbReference>
<dbReference type="GO" id="GO:0010498">
    <property type="term" value="P:proteasomal protein catabolic process"/>
    <property type="evidence" value="ECO:0007669"/>
    <property type="project" value="InterPro"/>
</dbReference>
<dbReference type="FunFam" id="1.20.5.170:FF:000018">
    <property type="entry name" value="AAA ATPase forming ring-shaped complexes"/>
    <property type="match status" value="1"/>
</dbReference>
<dbReference type="FunFam" id="2.40.50.140:FF:000169">
    <property type="entry name" value="AAA ATPase forming ring-shaped complexes"/>
    <property type="match status" value="1"/>
</dbReference>
<dbReference type="FunFam" id="3.40.50.300:FF:000155">
    <property type="entry name" value="AAA ATPase forming ring-shaped complexes"/>
    <property type="match status" value="1"/>
</dbReference>
<dbReference type="Gene3D" id="1.10.8.60">
    <property type="match status" value="1"/>
</dbReference>
<dbReference type="Gene3D" id="1.20.5.170">
    <property type="match status" value="1"/>
</dbReference>
<dbReference type="Gene3D" id="2.40.50.140">
    <property type="entry name" value="Nucleic acid-binding proteins"/>
    <property type="match status" value="2"/>
</dbReference>
<dbReference type="Gene3D" id="3.40.50.300">
    <property type="entry name" value="P-loop containing nucleotide triphosphate hydrolases"/>
    <property type="match status" value="1"/>
</dbReference>
<dbReference type="HAMAP" id="MF_02112">
    <property type="entry name" value="ARC_ATPase"/>
    <property type="match status" value="1"/>
</dbReference>
<dbReference type="InterPro" id="IPR003593">
    <property type="entry name" value="AAA+_ATPase"/>
</dbReference>
<dbReference type="InterPro" id="IPR050168">
    <property type="entry name" value="AAA_ATPase_domain"/>
</dbReference>
<dbReference type="InterPro" id="IPR003959">
    <property type="entry name" value="ATPase_AAA_core"/>
</dbReference>
<dbReference type="InterPro" id="IPR003960">
    <property type="entry name" value="ATPase_AAA_CS"/>
</dbReference>
<dbReference type="InterPro" id="IPR012340">
    <property type="entry name" value="NA-bd_OB-fold"/>
</dbReference>
<dbReference type="InterPro" id="IPR027417">
    <property type="entry name" value="P-loop_NTPase"/>
</dbReference>
<dbReference type="InterPro" id="IPR032501">
    <property type="entry name" value="Prot_ATP_ID_OB_2nd"/>
</dbReference>
<dbReference type="InterPro" id="IPR041626">
    <property type="entry name" value="Prot_ATP_ID_OB_N"/>
</dbReference>
<dbReference type="InterPro" id="IPR022482">
    <property type="entry name" value="Proteasome_ATPase"/>
</dbReference>
<dbReference type="NCBIfam" id="TIGR03689">
    <property type="entry name" value="pup_AAA"/>
    <property type="match status" value="1"/>
</dbReference>
<dbReference type="PANTHER" id="PTHR23077">
    <property type="entry name" value="AAA-FAMILY ATPASE"/>
    <property type="match status" value="1"/>
</dbReference>
<dbReference type="PANTHER" id="PTHR23077:SF144">
    <property type="entry name" value="PROTEASOME-ASSOCIATED ATPASE"/>
    <property type="match status" value="1"/>
</dbReference>
<dbReference type="Pfam" id="PF00004">
    <property type="entry name" value="AAA"/>
    <property type="match status" value="1"/>
</dbReference>
<dbReference type="Pfam" id="PF16450">
    <property type="entry name" value="Prot_ATP_ID_OB_C"/>
    <property type="match status" value="1"/>
</dbReference>
<dbReference type="Pfam" id="PF17758">
    <property type="entry name" value="Prot_ATP_ID_OB_N"/>
    <property type="match status" value="1"/>
</dbReference>
<dbReference type="SMART" id="SM00382">
    <property type="entry name" value="AAA"/>
    <property type="match status" value="1"/>
</dbReference>
<dbReference type="SUPFAM" id="SSF52540">
    <property type="entry name" value="P-loop containing nucleoside triphosphate hydrolases"/>
    <property type="match status" value="1"/>
</dbReference>
<dbReference type="PROSITE" id="PS00674">
    <property type="entry name" value="AAA"/>
    <property type="match status" value="1"/>
</dbReference>